<sequence>MEVIRVKINLCFYAESKLDIMPNHVLGVIIIDNIRSIYGEEGLIAYCMERLVPLCMYKGERTVYNHGRWKLVTHLSYLIDRPTNPMLLRIKEREIEEVMSVHIMDENVGQLYFKLELQQSDFNFLKHKLDPAIKAEGEPPKKVTLI</sequence>
<accession>Q65109</accession>
<protein>
    <recommendedName>
        <fullName>Protein beta</fullName>
    </recommendedName>
</protein>
<organism>
    <name type="scientific">Adelaide River virus</name>
    <name type="common">ARV</name>
    <dbReference type="NCBI Taxonomy" id="31612"/>
    <lineage>
        <taxon>Viruses</taxon>
        <taxon>Riboviria</taxon>
        <taxon>Orthornavirae</taxon>
        <taxon>Negarnaviricota</taxon>
        <taxon>Haploviricotina</taxon>
        <taxon>Monjiviricetes</taxon>
        <taxon>Mononegavirales</taxon>
        <taxon>Rhabdoviridae</taxon>
        <taxon>Alpharhabdovirinae</taxon>
        <taxon>Ephemerovirus</taxon>
        <taxon>Ephemerovirus adelaide</taxon>
    </lineage>
</organism>
<proteinExistence type="predicted"/>
<name>VPB_ARV</name>
<dbReference type="EMBL" id="U05987">
    <property type="protein sequence ID" value="AAA50193.1"/>
    <property type="molecule type" value="Genomic_RNA"/>
</dbReference>
<dbReference type="RefSeq" id="YP_009177246.1">
    <property type="nucleotide sequence ID" value="NC_028246.1"/>
</dbReference>
<dbReference type="GeneID" id="26123215"/>
<dbReference type="KEGG" id="vg:26123215"/>
<dbReference type="OrthoDB" id="31445at10239"/>
<organismHost>
    <name type="scientific">Bos taurus</name>
    <name type="common">Bovine</name>
    <dbReference type="NCBI Taxonomy" id="9913"/>
</organismHost>
<organismHost>
    <name type="scientific">Bubalus bubalis</name>
    <name type="common">Domestic water buffalo</name>
    <dbReference type="NCBI Taxonomy" id="89462"/>
</organismHost>
<organismHost>
    <name type="scientific">Culicoides</name>
    <dbReference type="NCBI Taxonomy" id="58271"/>
</organismHost>
<organismHost>
    <name type="scientific">Syncerus caffer</name>
    <name type="common">African buffalo</name>
    <dbReference type="NCBI Taxonomy" id="9970"/>
</organismHost>
<feature type="chain" id="PRO_0000299220" description="Protein beta">
    <location>
        <begin position="1"/>
        <end position="146"/>
    </location>
</feature>
<reference key="1">
    <citation type="journal article" date="1994" name="Virology">
        <title>Complex genome organization in the GNS-L intergenic region of Adelaide River rhabdovirus.</title>
        <authorList>
            <person name="Wang Y."/>
            <person name="McWilliam S.M."/>
            <person name="Cowley J.A."/>
            <person name="Walker P.J."/>
        </authorList>
    </citation>
    <scope>NUCLEOTIDE SEQUENCE [GENOMIC RNA]</scope>
    <source>
        <strain>DPP61</strain>
    </source>
</reference>